<comment type="function">
    <text evidence="2">Catalyzes the reduction of free and protein-bound methionine sulfoxide to methionine.</text>
</comment>
<comment type="catalytic activity">
    <reaction evidence="3">
        <text>L-methionyl-[protein] + [thioredoxin]-disulfide + H2O = L-methionyl-(R)-S-oxide-[protein] + [thioredoxin]-dithiol</text>
        <dbReference type="Rhea" id="RHEA:24164"/>
        <dbReference type="Rhea" id="RHEA-COMP:10698"/>
        <dbReference type="Rhea" id="RHEA-COMP:10700"/>
        <dbReference type="Rhea" id="RHEA-COMP:12313"/>
        <dbReference type="Rhea" id="RHEA-COMP:12314"/>
        <dbReference type="ChEBI" id="CHEBI:15377"/>
        <dbReference type="ChEBI" id="CHEBI:16044"/>
        <dbReference type="ChEBI" id="CHEBI:29950"/>
        <dbReference type="ChEBI" id="CHEBI:45764"/>
        <dbReference type="ChEBI" id="CHEBI:50058"/>
        <dbReference type="EC" id="1.8.4.12"/>
    </reaction>
</comment>
<comment type="catalytic activity">
    <reaction evidence="3">
        <text>[thioredoxin]-disulfide + L-methionine + H2O = L-methionine (R)-S-oxide + [thioredoxin]-dithiol</text>
        <dbReference type="Rhea" id="RHEA:21260"/>
        <dbReference type="Rhea" id="RHEA-COMP:10698"/>
        <dbReference type="Rhea" id="RHEA-COMP:10700"/>
        <dbReference type="ChEBI" id="CHEBI:15377"/>
        <dbReference type="ChEBI" id="CHEBI:29950"/>
        <dbReference type="ChEBI" id="CHEBI:50058"/>
        <dbReference type="ChEBI" id="CHEBI:57844"/>
        <dbReference type="ChEBI" id="CHEBI:58773"/>
        <dbReference type="EC" id="1.8.4.14"/>
    </reaction>
</comment>
<comment type="cofactor">
    <cofactor evidence="1">
        <name>Zn(2+)</name>
        <dbReference type="ChEBI" id="CHEBI:29105"/>
    </cofactor>
    <text evidence="1">Binds 1 zinc ion per subunit.</text>
</comment>
<comment type="subunit">
    <text evidence="1">Monomer.</text>
</comment>
<comment type="subcellular location">
    <subcellularLocation>
        <location evidence="7">Endoplasmic reticulum</location>
    </subcellularLocation>
    <text>Not detected in the mitochondrion.</text>
</comment>
<comment type="tissue specificity">
    <text evidence="8">Widely expressed. Detected in the sensory epithelia of the organ of Corti and vestibular end organs as early as P2 up to adulthood (at protein level). In the organ of Corti, present in inner and outer hair cells and, to a lesser extent, in supporting cells (at protein level). In hair cells, distributed throughout the cell body. Barely detectable level in stereocilia. Also observed in spiral ganglion neurons, but not in the stria vascularis. In the vestibular end organs, found throughout the sensory epithelium, but more intense expression in hair cells than in supporting cells (at protein level). In vestibular hair cells, present within cell bodies and to a lesser extent in kinocilia. Barely detectable in stereocilia.</text>
</comment>
<comment type="developmental stage">
    <text>Expressed in temporal bones at 15 dpc through postnatal 30, levels decrease thereafter, but is still present in the inner ear at P180.</text>
</comment>
<comment type="miscellaneous">
    <text evidence="10">Contains a signal peptide followed by a mitochondrial transit peptide within a single transcript. However, the protein is detected exclusively within the endoplasmic reticulum. This contasts with other species, including Homo sapiens, where the signal and transit peptides are encoded on 2 mutually exclusive exons (PubMed:15249228), and where alternative splicing leads to the synthesis of either the endoplasmic reticulum resident form or the mitochondrial form.</text>
</comment>
<comment type="similarity">
    <text evidence="9">Belongs to the MsrB Met sulfoxide reductase family.</text>
</comment>
<comment type="sequence caution" evidence="9">
    <conflict type="erroneous initiation">
        <sequence resource="EMBL-CDS" id="AAH96447"/>
    </conflict>
    <text>Truncated N-terminus.</text>
</comment>
<comment type="sequence caution" evidence="9">
    <conflict type="erroneous initiation">
        <sequence resource="EMBL-CDS" id="BAC39776"/>
    </conflict>
    <text>Truncated N-terminus.</text>
</comment>
<comment type="sequence caution" evidence="9">
    <conflict type="erroneous initiation">
        <sequence resource="EMBL-CDS" id="BAE23258"/>
    </conflict>
    <text>Truncated N-terminus.</text>
</comment>
<feature type="signal peptide" evidence="4">
    <location>
        <begin position="1"/>
        <end position="56"/>
    </location>
</feature>
<feature type="chain" id="PRO_0000327241" description="Methionine-R-sulfoxide reductase B3, mitochondrial">
    <location>
        <begin position="57"/>
        <end position="253"/>
    </location>
</feature>
<feature type="domain" description="MsrB" evidence="5">
    <location>
        <begin position="107"/>
        <end position="229"/>
    </location>
</feature>
<feature type="region of interest" description="Disordered" evidence="6">
    <location>
        <begin position="227"/>
        <end position="253"/>
    </location>
</feature>
<feature type="short sequence motif" description="Endoplasmic reticulum retention signal">
    <location>
        <begin position="250"/>
        <end position="253"/>
    </location>
</feature>
<feature type="active site" description="Nucleophile" evidence="5">
    <location>
        <position position="218"/>
    </location>
</feature>
<feature type="binding site" evidence="5">
    <location>
        <position position="146"/>
    </location>
    <ligand>
        <name>Zn(2+)</name>
        <dbReference type="ChEBI" id="CHEBI:29105"/>
    </ligand>
</feature>
<feature type="binding site" evidence="5">
    <location>
        <position position="149"/>
    </location>
    <ligand>
        <name>Zn(2+)</name>
        <dbReference type="ChEBI" id="CHEBI:29105"/>
    </ligand>
</feature>
<feature type="binding site" evidence="5">
    <location>
        <position position="195"/>
    </location>
    <ligand>
        <name>Zn(2+)</name>
        <dbReference type="ChEBI" id="CHEBI:29105"/>
    </ligand>
</feature>
<feature type="binding site" evidence="5">
    <location>
        <position position="198"/>
    </location>
    <ligand>
        <name>Zn(2+)</name>
        <dbReference type="ChEBI" id="CHEBI:29105"/>
    </ligand>
</feature>
<feature type="modified residue" description="N6-acetyllysine" evidence="12">
    <location>
        <position position="102"/>
    </location>
</feature>
<feature type="modified residue" description="Phosphoserine" evidence="11">
    <location>
        <position position="244"/>
    </location>
</feature>
<sequence length="253" mass="26832">MPPAAPSVARSREGGGIGQRRLVFPKSARRTLPCPIALCLGLCLAAAAATTTRASAAAFASAGDTTAMSAFNLLHLVTKSQPVAPRACGLPSGSCRDKKNCKVVFSQQELRKRLTPLQYHVTQEKGTESAFEGEYTHHKDPGIYKCVVCGTPLFKSETKFDSGSGWPAFHDVISSEAIEFTDDFSYGMHRVETSCSQCGAHLGHIFDDGPRPTGKRYCINSASLSFTPADSSEAEGSGIKESGSPAAADRAEL</sequence>
<proteinExistence type="evidence at protein level"/>
<gene>
    <name type="primary">Msrb3</name>
</gene>
<accession>Q8BU85</accession>
<protein>
    <recommendedName>
        <fullName>Methionine-R-sulfoxide reductase B3, mitochondrial</fullName>
        <shortName>MsrB3</shortName>
        <ecNumber evidence="3">1.8.4.12</ecNumber>
        <ecNumber evidence="3">1.8.4.14</ecNumber>
    </recommendedName>
</protein>
<evidence type="ECO:0000250" key="1"/>
<evidence type="ECO:0000250" key="2">
    <source>
        <dbReference type="UniProtKB" id="Q8IXL7"/>
    </source>
</evidence>
<evidence type="ECO:0000250" key="3">
    <source>
        <dbReference type="UniProtKB" id="Q9JLC3"/>
    </source>
</evidence>
<evidence type="ECO:0000255" key="4"/>
<evidence type="ECO:0000255" key="5">
    <source>
        <dbReference type="PROSITE-ProRule" id="PRU01126"/>
    </source>
</evidence>
<evidence type="ECO:0000256" key="6">
    <source>
        <dbReference type="SAM" id="MobiDB-lite"/>
    </source>
</evidence>
<evidence type="ECO:0000269" key="7">
    <source>
    </source>
</evidence>
<evidence type="ECO:0000269" key="8">
    <source>
    </source>
</evidence>
<evidence type="ECO:0000305" key="9"/>
<evidence type="ECO:0000305" key="10">
    <source>
    </source>
</evidence>
<evidence type="ECO:0007744" key="11">
    <source>
    </source>
</evidence>
<evidence type="ECO:0007744" key="12">
    <source>
    </source>
</evidence>
<reference key="1">
    <citation type="journal article" date="2009" name="PLoS Biol.">
        <title>Lineage-specific biology revealed by a finished genome assembly of the mouse.</title>
        <authorList>
            <person name="Church D.M."/>
            <person name="Goodstadt L."/>
            <person name="Hillier L.W."/>
            <person name="Zody M.C."/>
            <person name="Goldstein S."/>
            <person name="She X."/>
            <person name="Bult C.J."/>
            <person name="Agarwala R."/>
            <person name="Cherry J.L."/>
            <person name="DiCuccio M."/>
            <person name="Hlavina W."/>
            <person name="Kapustin Y."/>
            <person name="Meric P."/>
            <person name="Maglott D."/>
            <person name="Birtle Z."/>
            <person name="Marques A.C."/>
            <person name="Graves T."/>
            <person name="Zhou S."/>
            <person name="Teague B."/>
            <person name="Potamousis K."/>
            <person name="Churas C."/>
            <person name="Place M."/>
            <person name="Herschleb J."/>
            <person name="Runnheim R."/>
            <person name="Forrest D."/>
            <person name="Amos-Landgraf J."/>
            <person name="Schwartz D.C."/>
            <person name="Cheng Z."/>
            <person name="Lindblad-Toh K."/>
            <person name="Eichler E.E."/>
            <person name="Ponting C.P."/>
        </authorList>
    </citation>
    <scope>NUCLEOTIDE SEQUENCE [LARGE SCALE GENOMIC DNA]</scope>
    <source>
        <strain>C57BL/6J</strain>
    </source>
</reference>
<reference key="2">
    <citation type="journal article" date="2005" name="Science">
        <title>The transcriptional landscape of the mammalian genome.</title>
        <authorList>
            <person name="Carninci P."/>
            <person name="Kasukawa T."/>
            <person name="Katayama S."/>
            <person name="Gough J."/>
            <person name="Frith M.C."/>
            <person name="Maeda N."/>
            <person name="Oyama R."/>
            <person name="Ravasi T."/>
            <person name="Lenhard B."/>
            <person name="Wells C."/>
            <person name="Kodzius R."/>
            <person name="Shimokawa K."/>
            <person name="Bajic V.B."/>
            <person name="Brenner S.E."/>
            <person name="Batalov S."/>
            <person name="Forrest A.R."/>
            <person name="Zavolan M."/>
            <person name="Davis M.J."/>
            <person name="Wilming L.G."/>
            <person name="Aidinis V."/>
            <person name="Allen J.E."/>
            <person name="Ambesi-Impiombato A."/>
            <person name="Apweiler R."/>
            <person name="Aturaliya R.N."/>
            <person name="Bailey T.L."/>
            <person name="Bansal M."/>
            <person name="Baxter L."/>
            <person name="Beisel K.W."/>
            <person name="Bersano T."/>
            <person name="Bono H."/>
            <person name="Chalk A.M."/>
            <person name="Chiu K.P."/>
            <person name="Choudhary V."/>
            <person name="Christoffels A."/>
            <person name="Clutterbuck D.R."/>
            <person name="Crowe M.L."/>
            <person name="Dalla E."/>
            <person name="Dalrymple B.P."/>
            <person name="de Bono B."/>
            <person name="Della Gatta G."/>
            <person name="di Bernardo D."/>
            <person name="Down T."/>
            <person name="Engstrom P."/>
            <person name="Fagiolini M."/>
            <person name="Faulkner G."/>
            <person name="Fletcher C.F."/>
            <person name="Fukushima T."/>
            <person name="Furuno M."/>
            <person name="Futaki S."/>
            <person name="Gariboldi M."/>
            <person name="Georgii-Hemming P."/>
            <person name="Gingeras T.R."/>
            <person name="Gojobori T."/>
            <person name="Green R.E."/>
            <person name="Gustincich S."/>
            <person name="Harbers M."/>
            <person name="Hayashi Y."/>
            <person name="Hensch T.K."/>
            <person name="Hirokawa N."/>
            <person name="Hill D."/>
            <person name="Huminiecki L."/>
            <person name="Iacono M."/>
            <person name="Ikeo K."/>
            <person name="Iwama A."/>
            <person name="Ishikawa T."/>
            <person name="Jakt M."/>
            <person name="Kanapin A."/>
            <person name="Katoh M."/>
            <person name="Kawasawa Y."/>
            <person name="Kelso J."/>
            <person name="Kitamura H."/>
            <person name="Kitano H."/>
            <person name="Kollias G."/>
            <person name="Krishnan S.P."/>
            <person name="Kruger A."/>
            <person name="Kummerfeld S.K."/>
            <person name="Kurochkin I.V."/>
            <person name="Lareau L.F."/>
            <person name="Lazarevic D."/>
            <person name="Lipovich L."/>
            <person name="Liu J."/>
            <person name="Liuni S."/>
            <person name="McWilliam S."/>
            <person name="Madan Babu M."/>
            <person name="Madera M."/>
            <person name="Marchionni L."/>
            <person name="Matsuda H."/>
            <person name="Matsuzawa S."/>
            <person name="Miki H."/>
            <person name="Mignone F."/>
            <person name="Miyake S."/>
            <person name="Morris K."/>
            <person name="Mottagui-Tabar S."/>
            <person name="Mulder N."/>
            <person name="Nakano N."/>
            <person name="Nakauchi H."/>
            <person name="Ng P."/>
            <person name="Nilsson R."/>
            <person name="Nishiguchi S."/>
            <person name="Nishikawa S."/>
            <person name="Nori F."/>
            <person name="Ohara O."/>
            <person name="Okazaki Y."/>
            <person name="Orlando V."/>
            <person name="Pang K.C."/>
            <person name="Pavan W.J."/>
            <person name="Pavesi G."/>
            <person name="Pesole G."/>
            <person name="Petrovsky N."/>
            <person name="Piazza S."/>
            <person name="Reed J."/>
            <person name="Reid J.F."/>
            <person name="Ring B.Z."/>
            <person name="Ringwald M."/>
            <person name="Rost B."/>
            <person name="Ruan Y."/>
            <person name="Salzberg S.L."/>
            <person name="Sandelin A."/>
            <person name="Schneider C."/>
            <person name="Schoenbach C."/>
            <person name="Sekiguchi K."/>
            <person name="Semple C.A."/>
            <person name="Seno S."/>
            <person name="Sessa L."/>
            <person name="Sheng Y."/>
            <person name="Shibata Y."/>
            <person name="Shimada H."/>
            <person name="Shimada K."/>
            <person name="Silva D."/>
            <person name="Sinclair B."/>
            <person name="Sperling S."/>
            <person name="Stupka E."/>
            <person name="Sugiura K."/>
            <person name="Sultana R."/>
            <person name="Takenaka Y."/>
            <person name="Taki K."/>
            <person name="Tammoja K."/>
            <person name="Tan S.L."/>
            <person name="Tang S."/>
            <person name="Taylor M.S."/>
            <person name="Tegner J."/>
            <person name="Teichmann S.A."/>
            <person name="Ueda H.R."/>
            <person name="van Nimwegen E."/>
            <person name="Verardo R."/>
            <person name="Wei C.L."/>
            <person name="Yagi K."/>
            <person name="Yamanishi H."/>
            <person name="Zabarovsky E."/>
            <person name="Zhu S."/>
            <person name="Zimmer A."/>
            <person name="Hide W."/>
            <person name="Bult C."/>
            <person name="Grimmond S.M."/>
            <person name="Teasdale R.D."/>
            <person name="Liu E.T."/>
            <person name="Brusic V."/>
            <person name="Quackenbush J."/>
            <person name="Wahlestedt C."/>
            <person name="Mattick J.S."/>
            <person name="Hume D.A."/>
            <person name="Kai C."/>
            <person name="Sasaki D."/>
            <person name="Tomaru Y."/>
            <person name="Fukuda S."/>
            <person name="Kanamori-Katayama M."/>
            <person name="Suzuki M."/>
            <person name="Aoki J."/>
            <person name="Arakawa T."/>
            <person name="Iida J."/>
            <person name="Imamura K."/>
            <person name="Itoh M."/>
            <person name="Kato T."/>
            <person name="Kawaji H."/>
            <person name="Kawagashira N."/>
            <person name="Kawashima T."/>
            <person name="Kojima M."/>
            <person name="Kondo S."/>
            <person name="Konno H."/>
            <person name="Nakano K."/>
            <person name="Ninomiya N."/>
            <person name="Nishio T."/>
            <person name="Okada M."/>
            <person name="Plessy C."/>
            <person name="Shibata K."/>
            <person name="Shiraki T."/>
            <person name="Suzuki S."/>
            <person name="Tagami M."/>
            <person name="Waki K."/>
            <person name="Watahiki A."/>
            <person name="Okamura-Oho Y."/>
            <person name="Suzuki H."/>
            <person name="Kawai J."/>
            <person name="Hayashizaki Y."/>
        </authorList>
    </citation>
    <scope>NUCLEOTIDE SEQUENCE [LARGE SCALE MRNA] OF 20-253</scope>
    <source>
        <strain>C57BL/6J</strain>
        <tissue>Lung</tissue>
        <tissue>Urinary bladder</tissue>
    </source>
</reference>
<reference key="3">
    <citation type="journal article" date="2004" name="Genome Res.">
        <title>The status, quality, and expansion of the NIH full-length cDNA project: the Mammalian Gene Collection (MGC).</title>
        <authorList>
            <consortium name="The MGC Project Team"/>
        </authorList>
    </citation>
    <scope>NUCLEOTIDE SEQUENCE [LARGE SCALE MRNA] OF 48-253</scope>
    <source>
        <tissue>Olfactory epithelium</tissue>
    </source>
</reference>
<reference key="4">
    <citation type="journal article" date="2004" name="Biochem. Biophys. Res. Commun.">
        <title>Characterization of mouse endoplasmic reticulum methionine-R-sulfoxide reductase.</title>
        <authorList>
            <person name="Kim H.Y."/>
            <person name="Gladyshev V.N."/>
        </authorList>
    </citation>
    <scope>IDENTIFICATION</scope>
    <scope>SUBCELLULAR LOCATION</scope>
</reference>
<reference key="5">
    <citation type="journal article" date="2010" name="Cell">
        <title>A tissue-specific atlas of mouse protein phosphorylation and expression.</title>
        <authorList>
            <person name="Huttlin E.L."/>
            <person name="Jedrychowski M.P."/>
            <person name="Elias J.E."/>
            <person name="Goswami T."/>
            <person name="Rad R."/>
            <person name="Beausoleil S.A."/>
            <person name="Villen J."/>
            <person name="Haas W."/>
            <person name="Sowa M.E."/>
            <person name="Gygi S.P."/>
        </authorList>
    </citation>
    <scope>PHOSPHORYLATION [LARGE SCALE ANALYSIS] AT SER-244</scope>
    <scope>IDENTIFICATION BY MASS SPECTROMETRY [LARGE SCALE ANALYSIS]</scope>
    <source>
        <tissue>Heart</tissue>
        <tissue>Lung</tissue>
        <tissue>Spleen</tissue>
        <tissue>Testis</tissue>
    </source>
</reference>
<reference key="6">
    <citation type="journal article" date="2011" name="Am. J. Hum. Genet.">
        <title>Functional null mutations of MSRB3 encoding methionine sulfoxide reductase are associated with human deafness DFNB74.</title>
        <authorList>
            <person name="Ahmed Z.M."/>
            <person name="Yousaf R."/>
            <person name="Lee B.C."/>
            <person name="Khan S.N."/>
            <person name="Lee S."/>
            <person name="Lee K."/>
            <person name="Husnain T."/>
            <person name="Rehman A.U."/>
            <person name="Bonneux S."/>
            <person name="Ansar M."/>
            <person name="Ahmad W."/>
            <person name="Leal S.M."/>
            <person name="Gladyshev V.N."/>
            <person name="Belyantseva I.A."/>
            <person name="Van Camp G."/>
            <person name="Riazuddin S."/>
            <person name="Friedman T.B."/>
            <person name="Riazuddin S."/>
        </authorList>
    </citation>
    <scope>TISSUE SPECIFICITY</scope>
</reference>
<reference key="7">
    <citation type="journal article" date="2013" name="Mol. Cell">
        <title>SIRT5-mediated lysine desuccinylation impacts diverse metabolic pathways.</title>
        <authorList>
            <person name="Park J."/>
            <person name="Chen Y."/>
            <person name="Tishkoff D.X."/>
            <person name="Peng C."/>
            <person name="Tan M."/>
            <person name="Dai L."/>
            <person name="Xie Z."/>
            <person name="Zhang Y."/>
            <person name="Zwaans B.M."/>
            <person name="Skinner M.E."/>
            <person name="Lombard D.B."/>
            <person name="Zhao Y."/>
        </authorList>
    </citation>
    <scope>ACETYLATION [LARGE SCALE ANALYSIS] AT LYS-102</scope>
    <scope>IDENTIFICATION BY MASS SPECTROMETRY [LARGE SCALE ANALYSIS]</scope>
    <source>
        <tissue>Embryonic fibroblast</tissue>
    </source>
</reference>
<keyword id="KW-0007">Acetylation</keyword>
<keyword id="KW-0256">Endoplasmic reticulum</keyword>
<keyword id="KW-0479">Metal-binding</keyword>
<keyword id="KW-0560">Oxidoreductase</keyword>
<keyword id="KW-0597">Phosphoprotein</keyword>
<keyword id="KW-1185">Reference proteome</keyword>
<keyword id="KW-0732">Signal</keyword>
<keyword id="KW-0862">Zinc</keyword>
<organism>
    <name type="scientific">Mus musculus</name>
    <name type="common">Mouse</name>
    <dbReference type="NCBI Taxonomy" id="10090"/>
    <lineage>
        <taxon>Eukaryota</taxon>
        <taxon>Metazoa</taxon>
        <taxon>Chordata</taxon>
        <taxon>Craniata</taxon>
        <taxon>Vertebrata</taxon>
        <taxon>Euteleostomi</taxon>
        <taxon>Mammalia</taxon>
        <taxon>Eutheria</taxon>
        <taxon>Euarchontoglires</taxon>
        <taxon>Glires</taxon>
        <taxon>Rodentia</taxon>
        <taxon>Myomorpha</taxon>
        <taxon>Muroidea</taxon>
        <taxon>Muridae</taxon>
        <taxon>Murinae</taxon>
        <taxon>Mus</taxon>
        <taxon>Mus</taxon>
    </lineage>
</organism>
<name>MSRB3_MOUSE</name>
<dbReference type="EC" id="1.8.4.12" evidence="3"/>
<dbReference type="EC" id="1.8.4.14" evidence="3"/>
<dbReference type="EMBL" id="AC138388">
    <property type="status" value="NOT_ANNOTATED_CDS"/>
    <property type="molecule type" value="Genomic_DNA"/>
</dbReference>
<dbReference type="EMBL" id="AK086975">
    <property type="protein sequence ID" value="BAC39776.1"/>
    <property type="status" value="ALT_INIT"/>
    <property type="molecule type" value="mRNA"/>
</dbReference>
<dbReference type="EMBL" id="AK137163">
    <property type="protein sequence ID" value="BAE23258.1"/>
    <property type="status" value="ALT_INIT"/>
    <property type="molecule type" value="mRNA"/>
</dbReference>
<dbReference type="EMBL" id="BC096447">
    <property type="protein sequence ID" value="AAH96447.1"/>
    <property type="status" value="ALT_INIT"/>
    <property type="molecule type" value="mRNA"/>
</dbReference>
<dbReference type="RefSeq" id="NP_796066.1">
    <property type="nucleotide sequence ID" value="NM_177092.4"/>
</dbReference>
<dbReference type="RefSeq" id="XP_006513827.1">
    <property type="nucleotide sequence ID" value="XM_006513764.3"/>
</dbReference>
<dbReference type="SMR" id="Q8BU85"/>
<dbReference type="FunCoup" id="Q8BU85">
    <property type="interactions" value="901"/>
</dbReference>
<dbReference type="IntAct" id="Q8BU85">
    <property type="interactions" value="1"/>
</dbReference>
<dbReference type="MINT" id="Q8BU85"/>
<dbReference type="STRING" id="10090.ENSMUSP00000089781"/>
<dbReference type="GlyGen" id="Q8BU85">
    <property type="glycosylation" value="1 site, 1 O-linked glycan (1 site)"/>
</dbReference>
<dbReference type="iPTMnet" id="Q8BU85"/>
<dbReference type="PhosphoSitePlus" id="Q8BU85"/>
<dbReference type="SwissPalm" id="Q8BU85"/>
<dbReference type="jPOST" id="Q8BU85"/>
<dbReference type="PaxDb" id="10090-ENSMUSP00000089781"/>
<dbReference type="PeptideAtlas" id="Q8BU85"/>
<dbReference type="ProteomicsDB" id="286070"/>
<dbReference type="Pumba" id="Q8BU85"/>
<dbReference type="DNASU" id="320183"/>
<dbReference type="GeneID" id="320183"/>
<dbReference type="KEGG" id="mmu:320183"/>
<dbReference type="UCSC" id="uc007hfh.2">
    <property type="organism name" value="mouse"/>
</dbReference>
<dbReference type="AGR" id="MGI:2443538"/>
<dbReference type="CTD" id="253827"/>
<dbReference type="MGI" id="MGI:2443538">
    <property type="gene designation" value="Msrb3"/>
</dbReference>
<dbReference type="eggNOG" id="KOG0856">
    <property type="taxonomic scope" value="Eukaryota"/>
</dbReference>
<dbReference type="InParanoid" id="Q8BU85"/>
<dbReference type="OrthoDB" id="44061at2759"/>
<dbReference type="PhylomeDB" id="Q8BU85"/>
<dbReference type="TreeFam" id="TF329147"/>
<dbReference type="BRENDA" id="1.8.4.12">
    <property type="organism ID" value="3474"/>
</dbReference>
<dbReference type="Reactome" id="R-MMU-5676934">
    <property type="pathway name" value="Protein repair"/>
</dbReference>
<dbReference type="BioGRID-ORCS" id="320183">
    <property type="hits" value="2 hits in 77 CRISPR screens"/>
</dbReference>
<dbReference type="ChiTaRS" id="Msrb3">
    <property type="organism name" value="mouse"/>
</dbReference>
<dbReference type="PRO" id="PR:Q8BU85"/>
<dbReference type="Proteomes" id="UP000000589">
    <property type="component" value="Unplaced"/>
</dbReference>
<dbReference type="RNAct" id="Q8BU85">
    <property type="molecule type" value="protein"/>
</dbReference>
<dbReference type="GO" id="GO:0005783">
    <property type="term" value="C:endoplasmic reticulum"/>
    <property type="evidence" value="ECO:0000250"/>
    <property type="project" value="HGNC-UCL"/>
</dbReference>
<dbReference type="GO" id="GO:0005739">
    <property type="term" value="C:mitochondrion"/>
    <property type="evidence" value="ECO:0000266"/>
    <property type="project" value="MGI"/>
</dbReference>
<dbReference type="GO" id="GO:0033745">
    <property type="term" value="F:L-methionine-(R)-S-oxide reductase activity"/>
    <property type="evidence" value="ECO:0007669"/>
    <property type="project" value="UniProtKB-EC"/>
</dbReference>
<dbReference type="GO" id="GO:0033743">
    <property type="term" value="F:peptide-methionine (R)-S-oxide reductase activity"/>
    <property type="evidence" value="ECO:0000250"/>
    <property type="project" value="HGNC-UCL"/>
</dbReference>
<dbReference type="GO" id="GO:0008270">
    <property type="term" value="F:zinc ion binding"/>
    <property type="evidence" value="ECO:0000250"/>
    <property type="project" value="HGNC-UCL"/>
</dbReference>
<dbReference type="GO" id="GO:0030091">
    <property type="term" value="P:protein repair"/>
    <property type="evidence" value="ECO:0000250"/>
    <property type="project" value="HGNC-UCL"/>
</dbReference>
<dbReference type="GO" id="GO:0006979">
    <property type="term" value="P:response to oxidative stress"/>
    <property type="evidence" value="ECO:0007669"/>
    <property type="project" value="InterPro"/>
</dbReference>
<dbReference type="FunFam" id="2.170.150.20:FF:000004">
    <property type="entry name" value="Peptide-methionine (R)-S-oxide reductase"/>
    <property type="match status" value="1"/>
</dbReference>
<dbReference type="Gene3D" id="2.170.150.20">
    <property type="entry name" value="Peptide methionine sulfoxide reductase"/>
    <property type="match status" value="1"/>
</dbReference>
<dbReference type="HAMAP" id="MF_01400">
    <property type="entry name" value="MsrB"/>
    <property type="match status" value="1"/>
</dbReference>
<dbReference type="InterPro" id="IPR028427">
    <property type="entry name" value="Met_Sox_Rdtase_MsrB"/>
</dbReference>
<dbReference type="InterPro" id="IPR002579">
    <property type="entry name" value="Met_Sox_Rdtase_MsrB_dom"/>
</dbReference>
<dbReference type="InterPro" id="IPR011057">
    <property type="entry name" value="Mss4-like_sf"/>
</dbReference>
<dbReference type="NCBIfam" id="TIGR00357">
    <property type="entry name" value="peptide-methionine (R)-S-oxide reductase MsrB"/>
    <property type="match status" value="1"/>
</dbReference>
<dbReference type="PANTHER" id="PTHR10173">
    <property type="entry name" value="METHIONINE SULFOXIDE REDUCTASE"/>
    <property type="match status" value="1"/>
</dbReference>
<dbReference type="PANTHER" id="PTHR10173:SF56">
    <property type="entry name" value="METHIONINE-R-SULFOXIDE REDUCTASE B3"/>
    <property type="match status" value="1"/>
</dbReference>
<dbReference type="Pfam" id="PF01641">
    <property type="entry name" value="SelR"/>
    <property type="match status" value="1"/>
</dbReference>
<dbReference type="SUPFAM" id="SSF51316">
    <property type="entry name" value="Mss4-like"/>
    <property type="match status" value="1"/>
</dbReference>
<dbReference type="PROSITE" id="PS51790">
    <property type="entry name" value="MSRB"/>
    <property type="match status" value="1"/>
</dbReference>